<accession>Q9GP13</accession>
<dbReference type="EMBL" id="AJ269658">
    <property type="protein sequence ID" value="CAB55818.2"/>
    <property type="molecule type" value="mRNA"/>
</dbReference>
<dbReference type="SMR" id="Q9GP13"/>
<dbReference type="MEROPS" id="I04.076"/>
<dbReference type="GO" id="GO:0005615">
    <property type="term" value="C:extracellular space"/>
    <property type="evidence" value="ECO:0007669"/>
    <property type="project" value="InterPro"/>
</dbReference>
<dbReference type="GO" id="GO:0004867">
    <property type="term" value="F:serine-type endopeptidase inhibitor activity"/>
    <property type="evidence" value="ECO:0007669"/>
    <property type="project" value="UniProtKB-KW"/>
</dbReference>
<dbReference type="GO" id="GO:0090729">
    <property type="term" value="F:toxin activity"/>
    <property type="evidence" value="ECO:0007669"/>
    <property type="project" value="UniProtKB-KW"/>
</dbReference>
<dbReference type="GO" id="GO:0002376">
    <property type="term" value="P:immune system process"/>
    <property type="evidence" value="ECO:0007669"/>
    <property type="project" value="UniProtKB-KW"/>
</dbReference>
<dbReference type="CDD" id="cd00172">
    <property type="entry name" value="serpin"/>
    <property type="match status" value="1"/>
</dbReference>
<dbReference type="Gene3D" id="2.30.39.10">
    <property type="entry name" value="Alpha-1-antitrypsin, domain 1"/>
    <property type="match status" value="1"/>
</dbReference>
<dbReference type="Gene3D" id="3.30.497.10">
    <property type="entry name" value="Antithrombin, subunit I, domain 2"/>
    <property type="match status" value="1"/>
</dbReference>
<dbReference type="InterPro" id="IPR023795">
    <property type="entry name" value="Serpin_CS"/>
</dbReference>
<dbReference type="InterPro" id="IPR023796">
    <property type="entry name" value="Serpin_dom"/>
</dbReference>
<dbReference type="InterPro" id="IPR000215">
    <property type="entry name" value="Serpin_fam"/>
</dbReference>
<dbReference type="InterPro" id="IPR036186">
    <property type="entry name" value="Serpin_sf"/>
</dbReference>
<dbReference type="InterPro" id="IPR042178">
    <property type="entry name" value="Serpin_sf_1"/>
</dbReference>
<dbReference type="InterPro" id="IPR042185">
    <property type="entry name" value="Serpin_sf_2"/>
</dbReference>
<dbReference type="PANTHER" id="PTHR11461:SF211">
    <property type="entry name" value="GH10112P-RELATED"/>
    <property type="match status" value="1"/>
</dbReference>
<dbReference type="PANTHER" id="PTHR11461">
    <property type="entry name" value="SERINE PROTEASE INHIBITOR, SERPIN"/>
    <property type="match status" value="1"/>
</dbReference>
<dbReference type="Pfam" id="PF00079">
    <property type="entry name" value="Serpin"/>
    <property type="match status" value="1"/>
</dbReference>
<dbReference type="SMART" id="SM00093">
    <property type="entry name" value="SERPIN"/>
    <property type="match status" value="1"/>
</dbReference>
<dbReference type="SUPFAM" id="SSF56574">
    <property type="entry name" value="Serpins"/>
    <property type="match status" value="1"/>
</dbReference>
<dbReference type="PROSITE" id="PS00284">
    <property type="entry name" value="SERPIN"/>
    <property type="match status" value="1"/>
</dbReference>
<protein>
    <recommendedName>
        <fullName evidence="6">Iris</fullName>
    </recommendedName>
    <alternativeName>
        <fullName evidence="6">I. ricinus immunosuppressor</fullName>
    </alternativeName>
    <alternativeName>
        <fullName evidence="6 7">Seq24/MBP</fullName>
    </alternativeName>
</protein>
<sequence length="377" mass="41364">MEASLSNHILNFSVDLYKRLKPSGKDTAGNVFCSPFSIAAALSMALAGARGNTAKQIAAILHSNDDKIHDHFSSFLCKLPSYAPDVALHIANRMYSEQTFHPKAEYTTLLQKSYDSTIKAVDFAGNADRVRLEVNAWVEEVTRSKIRDLLAPGTVDSSTSLILVNAIYFKGLWDSQFKPSATKPGDFHLTPQTSKKVDMMHQKGDFKMGHCSDLKVTALEIPYKGNKTSMVILLPEDVEGLSVLEEHLTAPKLSALLGGMYVTSDVNLRLPKFKLEQSIGLKDVLMAMGVKDFFTSLADLSGISAAGNLCASDIIHKAFVEVNEEGTEAAAATAIPIMLMCARFPQVVNFFVDRPFMFLIHSHDPDVVLFMGSIREL</sequence>
<reference evidence="9" key="1">
    <citation type="journal article" date="2002" name="Am. J. Trop. Med. Hyg.">
        <title>Isolation of Ixodes ricinus salivary gland mRNA encoding factors induced during blood feeding.</title>
        <authorList>
            <person name="Leboulle G."/>
            <person name="Rochez C."/>
            <person name="Louahed J."/>
            <person name="Rutti B."/>
            <person name="Brossard M."/>
            <person name="Bollen A."/>
            <person name="Godfroid E."/>
        </authorList>
    </citation>
    <scope>NUCLEOTIDE SEQUENCE [LARGE SCALE MRNA]</scope>
    <scope>TISSUE SPECIFICITY</scope>
    <scope>INDUCTION BY BLOOD FEEDING</scope>
    <source>
        <tissue evidence="9">Salivary gland</tissue>
    </source>
</reference>
<reference evidence="8" key="2">
    <citation type="journal article" date="2002" name="J. Biol. Chem.">
        <title>Characterization of a novel salivary immunosuppressive protein from Ixodes ricinus ticks.</title>
        <authorList>
            <person name="Leboulle G."/>
            <person name="Crippa M."/>
            <person name="Decrem Y."/>
            <person name="Mejri N."/>
            <person name="Brossard M."/>
            <person name="Bollen A."/>
            <person name="Godfroid E."/>
        </authorList>
    </citation>
    <scope>FUNCTION</scope>
    <scope>SUBCELLULAR LOCATION</scope>
    <scope>TISSUE SPECIFICITY</scope>
    <scope>INDUCTION BY BLOOD FEEDING</scope>
</reference>
<reference evidence="8" key="3">
    <citation type="journal article" date="2006" name="J. Biol. Chem.">
        <title>Anti-hemostatic effects of a serpin from the saliva of the tick Ixodes ricinus.</title>
        <authorList>
            <person name="Prevot P.P."/>
            <person name="Adam B."/>
            <person name="Boudjeltia K.Z."/>
            <person name="Brossard M."/>
            <person name="Lins L."/>
            <person name="Cauchie P."/>
            <person name="Brasseur R."/>
            <person name="Vanhaeverbeek M."/>
            <person name="Vanhamme L."/>
            <person name="Godfroid E."/>
        </authorList>
    </citation>
    <scope>FUNCTION</scope>
    <scope>MUTAGENESIS OF ALA-332; LEU-339 AND MET-340</scope>
</reference>
<reference evidence="8" key="4">
    <citation type="journal article" date="2009" name="FEBS J.">
        <title>Exosites mediate the anti-inflammatory effects of a multifunctional serpin from the saliva of the tick Ixodes ricinus.</title>
        <authorList>
            <person name="Prevot P.P."/>
            <person name="Beschin A."/>
            <person name="Lins L."/>
            <person name="Beaufays J."/>
            <person name="Grosjean A."/>
            <person name="Bruys L."/>
            <person name="Adam B."/>
            <person name="Brossard M."/>
            <person name="Brasseur R."/>
            <person name="Zouaoui Boudjeltia K."/>
            <person name="Vanhamme L."/>
            <person name="Godfroid E."/>
        </authorList>
    </citation>
    <scope>FUNCTION</scope>
</reference>
<organism evidence="9">
    <name type="scientific">Ixodes ricinus</name>
    <name type="common">Common tick</name>
    <name type="synonym">Acarus ricinus</name>
    <dbReference type="NCBI Taxonomy" id="34613"/>
    <lineage>
        <taxon>Eukaryota</taxon>
        <taxon>Metazoa</taxon>
        <taxon>Ecdysozoa</taxon>
        <taxon>Arthropoda</taxon>
        <taxon>Chelicerata</taxon>
        <taxon>Arachnida</taxon>
        <taxon>Acari</taxon>
        <taxon>Parasitiformes</taxon>
        <taxon>Ixodida</taxon>
        <taxon>Ixodoidea</taxon>
        <taxon>Ixodidae</taxon>
        <taxon>Ixodinae</taxon>
        <taxon>Ixodes</taxon>
    </lineage>
</organism>
<keyword id="KW-1203">Blood coagulation cascade inhibiting toxin</keyword>
<keyword id="KW-0325">Glycoprotein</keyword>
<keyword id="KW-1199">Hemostasis impairing toxin</keyword>
<keyword id="KW-0391">Immunity</keyword>
<keyword id="KW-1201">Platelet aggregation inhibiting toxin</keyword>
<keyword id="KW-0646">Protease inhibitor</keyword>
<keyword id="KW-0964">Secreted</keyword>
<keyword id="KW-0722">Serine protease inhibitor</keyword>
<keyword id="KW-0800">Toxin</keyword>
<comment type="function">
    <text evidence="2 4 5">Serine protease inhibitor with anticoagulant and immunosuppressive properties that can modulate blood feeding of ticks on vertebrate species (PubMed:11792703, PubMed:16672226, PubMed:19438720). Strongly inhibits human leukocyte elastase (ELANE) and porcine pancreatic elastase. Moderately inhibits human tPA/tissue-type plasminogen activator (PLAT), coagulation factor Xa (F10), thrombin (F2) and trypsin (PubMed:16672226). Does not inhibit human plasmin (PLG) (PubMed:16672226). Inhibits platelet aggregation (PubMed:16672226). Inhibits the intrinsic pathway of blood coagulation in the host (PubMed:16672226). Inhibits fibrinolysis in the host (PubMed:16672226). Inhibits proliferation of mouse splenocytes (PubMed:11792703). Decreases the number of IFN-gamma (IFNG)-producing human peripheral blood mononuclear cells (PBMCs) after stimulation with phytohemagglutinin A (PHA) (PubMed:11792703). Increases the number of IL10-producing human PBMCs after stimulation with lipopolysaccharides (LPS) with no significant effect on IL10 production (PubMed:11792703). Inhibits production of IFNG, IL6, TNF-alpha (TNF) and CXCL8 by human PBMCs (PubMed:11792703, PubMed:19438720). Binds to monocyte/macrophage subpopulation of the host PBMCs (PubMed:19438720). Increases both survival rate and survival time in mice with LPS-induced endotoxemic shock (PubMed:19438720).</text>
</comment>
<comment type="subcellular location">
    <subcellularLocation>
        <location evidence="2">Secreted</location>
    </subcellularLocation>
</comment>
<comment type="tissue specificity">
    <text evidence="2 3">Female saliva (at protein level) (PubMed:11792703). Female salivary gland (at protein level) (PubMed:11792703, PubMed:12139212).</text>
</comment>
<comment type="induction">
    <text evidence="2 3">Induced by blood feeding.</text>
</comment>
<comment type="miscellaneous">
    <text evidence="5">Inhibition of LPS-induced TNF-alpha release is independent of the antiprotease activity of iris.</text>
</comment>
<comment type="similarity">
    <text evidence="8">Belongs to the serpin family.</text>
</comment>
<feature type="chain" id="PRO_0000460385" description="Iris">
    <location>
        <begin position="1"/>
        <end position="377"/>
    </location>
</feature>
<feature type="glycosylation site" description="N-linked (GlcNAc...) asparagine" evidence="1">
    <location>
        <position position="11"/>
    </location>
</feature>
<feature type="glycosylation site" description="N-linked (GlcNAc...) asparagine" evidence="1">
    <location>
        <position position="226"/>
    </location>
</feature>
<feature type="mutagenesis site" description="Abolishes ability to inhibit host serine proteases." evidence="4">
    <original>A</original>
    <variation>P</variation>
    <location>
        <position position="332"/>
    </location>
</feature>
<feature type="mutagenesis site" description="Abolishes ability to inhibit host serine proteases, host intrinsic pathways of blood coagulation and fibrinolysis. Does not affect the inhibition of TNF-alpha release from PBMCs." evidence="4">
    <original>L</original>
    <variation>A</variation>
    <location>
        <position position="339"/>
    </location>
</feature>
<feature type="mutagenesis site" description="Abolishes inhibition of human leukocyte elastase and porcine pancreatic elastase. Increases affinity for, and inhibition of, human coagulation factor Xa, thrombin, trypsin and plasmin. Increases inhibition of both the intrinsic and extrinsic pathways of blood coagulation in the host. Increases inhibition of fibrinolysis in the host." evidence="4">
    <original>M</original>
    <variation>R</variation>
    <location>
        <position position="340"/>
    </location>
</feature>
<evidence type="ECO:0000255" key="1">
    <source>
        <dbReference type="PROSITE-ProRule" id="PRU00498"/>
    </source>
</evidence>
<evidence type="ECO:0000269" key="2">
    <source>
    </source>
</evidence>
<evidence type="ECO:0000269" key="3">
    <source>
    </source>
</evidence>
<evidence type="ECO:0000269" key="4">
    <source>
    </source>
</evidence>
<evidence type="ECO:0000269" key="5">
    <source>
    </source>
</evidence>
<evidence type="ECO:0000303" key="6">
    <source>
    </source>
</evidence>
<evidence type="ECO:0000303" key="7">
    <source>
    </source>
</evidence>
<evidence type="ECO:0000305" key="8"/>
<evidence type="ECO:0000312" key="9">
    <source>
        <dbReference type="EMBL" id="CAB55818.2"/>
    </source>
</evidence>
<proteinExistence type="evidence at protein level"/>
<name>IRIS_IXORI</name>